<gene>
    <name evidence="1" type="primary">lipA</name>
    <name type="ordered locus">LBL_1547</name>
</gene>
<dbReference type="EC" id="2.8.1.8" evidence="1"/>
<dbReference type="EMBL" id="CP000348">
    <property type="protein sequence ID" value="ABJ79010.1"/>
    <property type="molecule type" value="Genomic_DNA"/>
</dbReference>
<dbReference type="SMR" id="Q051I5"/>
<dbReference type="KEGG" id="lbl:LBL_1547"/>
<dbReference type="HOGENOM" id="CLU_033144_2_1_12"/>
<dbReference type="UniPathway" id="UPA00538">
    <property type="reaction ID" value="UER00593"/>
</dbReference>
<dbReference type="GO" id="GO:0005737">
    <property type="term" value="C:cytoplasm"/>
    <property type="evidence" value="ECO:0007669"/>
    <property type="project" value="UniProtKB-SubCell"/>
</dbReference>
<dbReference type="GO" id="GO:0051539">
    <property type="term" value="F:4 iron, 4 sulfur cluster binding"/>
    <property type="evidence" value="ECO:0007669"/>
    <property type="project" value="UniProtKB-UniRule"/>
</dbReference>
<dbReference type="GO" id="GO:0016992">
    <property type="term" value="F:lipoate synthase activity"/>
    <property type="evidence" value="ECO:0007669"/>
    <property type="project" value="UniProtKB-UniRule"/>
</dbReference>
<dbReference type="GO" id="GO:0046872">
    <property type="term" value="F:metal ion binding"/>
    <property type="evidence" value="ECO:0007669"/>
    <property type="project" value="UniProtKB-KW"/>
</dbReference>
<dbReference type="CDD" id="cd01335">
    <property type="entry name" value="Radical_SAM"/>
    <property type="match status" value="1"/>
</dbReference>
<dbReference type="FunFam" id="3.20.20.70:FF:000186">
    <property type="entry name" value="Lipoyl synthase"/>
    <property type="match status" value="1"/>
</dbReference>
<dbReference type="Gene3D" id="3.20.20.70">
    <property type="entry name" value="Aldolase class I"/>
    <property type="match status" value="1"/>
</dbReference>
<dbReference type="HAMAP" id="MF_00206">
    <property type="entry name" value="Lipoyl_synth"/>
    <property type="match status" value="1"/>
</dbReference>
<dbReference type="InterPro" id="IPR013785">
    <property type="entry name" value="Aldolase_TIM"/>
</dbReference>
<dbReference type="InterPro" id="IPR006638">
    <property type="entry name" value="Elp3/MiaA/NifB-like_rSAM"/>
</dbReference>
<dbReference type="InterPro" id="IPR003698">
    <property type="entry name" value="Lipoyl_synth"/>
</dbReference>
<dbReference type="InterPro" id="IPR007197">
    <property type="entry name" value="rSAM"/>
</dbReference>
<dbReference type="NCBIfam" id="TIGR00510">
    <property type="entry name" value="lipA"/>
    <property type="match status" value="1"/>
</dbReference>
<dbReference type="NCBIfam" id="NF004019">
    <property type="entry name" value="PRK05481.1"/>
    <property type="match status" value="1"/>
</dbReference>
<dbReference type="NCBIfam" id="NF009544">
    <property type="entry name" value="PRK12928.1"/>
    <property type="match status" value="1"/>
</dbReference>
<dbReference type="PANTHER" id="PTHR10949">
    <property type="entry name" value="LIPOYL SYNTHASE"/>
    <property type="match status" value="1"/>
</dbReference>
<dbReference type="PANTHER" id="PTHR10949:SF0">
    <property type="entry name" value="LIPOYL SYNTHASE, MITOCHONDRIAL"/>
    <property type="match status" value="1"/>
</dbReference>
<dbReference type="Pfam" id="PF04055">
    <property type="entry name" value="Radical_SAM"/>
    <property type="match status" value="1"/>
</dbReference>
<dbReference type="PIRSF" id="PIRSF005963">
    <property type="entry name" value="Lipoyl_synth"/>
    <property type="match status" value="1"/>
</dbReference>
<dbReference type="SFLD" id="SFLDF00271">
    <property type="entry name" value="lipoyl_synthase"/>
    <property type="match status" value="1"/>
</dbReference>
<dbReference type="SFLD" id="SFLDG01058">
    <property type="entry name" value="lipoyl_synthase_like"/>
    <property type="match status" value="1"/>
</dbReference>
<dbReference type="SMART" id="SM00729">
    <property type="entry name" value="Elp3"/>
    <property type="match status" value="1"/>
</dbReference>
<dbReference type="SUPFAM" id="SSF102114">
    <property type="entry name" value="Radical SAM enzymes"/>
    <property type="match status" value="1"/>
</dbReference>
<dbReference type="PROSITE" id="PS51918">
    <property type="entry name" value="RADICAL_SAM"/>
    <property type="match status" value="1"/>
</dbReference>
<keyword id="KW-0004">4Fe-4S</keyword>
<keyword id="KW-0963">Cytoplasm</keyword>
<keyword id="KW-0408">Iron</keyword>
<keyword id="KW-0411">Iron-sulfur</keyword>
<keyword id="KW-0479">Metal-binding</keyword>
<keyword id="KW-0949">S-adenosyl-L-methionine</keyword>
<keyword id="KW-0808">Transferase</keyword>
<comment type="function">
    <text evidence="1">Catalyzes the radical-mediated insertion of two sulfur atoms into the C-6 and C-8 positions of the octanoyl moiety bound to the lipoyl domains of lipoate-dependent enzymes, thereby converting the octanoylated domains into lipoylated derivatives.</text>
</comment>
<comment type="catalytic activity">
    <reaction evidence="1">
        <text>[[Fe-S] cluster scaffold protein carrying a second [4Fe-4S](2+) cluster] + N(6)-octanoyl-L-lysyl-[protein] + 2 oxidized [2Fe-2S]-[ferredoxin] + 2 S-adenosyl-L-methionine + 4 H(+) = [[Fe-S] cluster scaffold protein] + N(6)-[(R)-dihydrolipoyl]-L-lysyl-[protein] + 4 Fe(3+) + 2 hydrogen sulfide + 2 5'-deoxyadenosine + 2 L-methionine + 2 reduced [2Fe-2S]-[ferredoxin]</text>
        <dbReference type="Rhea" id="RHEA:16585"/>
        <dbReference type="Rhea" id="RHEA-COMP:9928"/>
        <dbReference type="Rhea" id="RHEA-COMP:10000"/>
        <dbReference type="Rhea" id="RHEA-COMP:10001"/>
        <dbReference type="Rhea" id="RHEA-COMP:10475"/>
        <dbReference type="Rhea" id="RHEA-COMP:14568"/>
        <dbReference type="Rhea" id="RHEA-COMP:14569"/>
        <dbReference type="ChEBI" id="CHEBI:15378"/>
        <dbReference type="ChEBI" id="CHEBI:17319"/>
        <dbReference type="ChEBI" id="CHEBI:29034"/>
        <dbReference type="ChEBI" id="CHEBI:29919"/>
        <dbReference type="ChEBI" id="CHEBI:33722"/>
        <dbReference type="ChEBI" id="CHEBI:33737"/>
        <dbReference type="ChEBI" id="CHEBI:33738"/>
        <dbReference type="ChEBI" id="CHEBI:57844"/>
        <dbReference type="ChEBI" id="CHEBI:59789"/>
        <dbReference type="ChEBI" id="CHEBI:78809"/>
        <dbReference type="ChEBI" id="CHEBI:83100"/>
        <dbReference type="EC" id="2.8.1.8"/>
    </reaction>
</comment>
<comment type="cofactor">
    <cofactor evidence="1">
        <name>[4Fe-4S] cluster</name>
        <dbReference type="ChEBI" id="CHEBI:49883"/>
    </cofactor>
    <text evidence="1">Binds 2 [4Fe-4S] clusters per subunit. One cluster is coordinated with 3 cysteines and an exchangeable S-adenosyl-L-methionine.</text>
</comment>
<comment type="pathway">
    <text evidence="1">Protein modification; protein lipoylation via endogenous pathway; protein N(6)-(lipoyl)lysine from octanoyl-[acyl-carrier-protein]: step 2/2.</text>
</comment>
<comment type="subcellular location">
    <subcellularLocation>
        <location evidence="1">Cytoplasm</location>
    </subcellularLocation>
</comment>
<comment type="similarity">
    <text evidence="1">Belongs to the radical SAM superfamily. Lipoyl synthase family.</text>
</comment>
<accession>Q051I5</accession>
<organism>
    <name type="scientific">Leptospira borgpetersenii serovar Hardjo-bovis (strain L550)</name>
    <dbReference type="NCBI Taxonomy" id="355276"/>
    <lineage>
        <taxon>Bacteria</taxon>
        <taxon>Pseudomonadati</taxon>
        <taxon>Spirochaetota</taxon>
        <taxon>Spirochaetia</taxon>
        <taxon>Leptospirales</taxon>
        <taxon>Leptospiraceae</taxon>
        <taxon>Leptospira</taxon>
    </lineage>
</organism>
<evidence type="ECO:0000255" key="1">
    <source>
        <dbReference type="HAMAP-Rule" id="MF_00206"/>
    </source>
</evidence>
<evidence type="ECO:0000255" key="2">
    <source>
        <dbReference type="PROSITE-ProRule" id="PRU01266"/>
    </source>
</evidence>
<feature type="chain" id="PRO_0000325272" description="Lipoyl synthase">
    <location>
        <begin position="1"/>
        <end position="302"/>
    </location>
</feature>
<feature type="domain" description="Radical SAM core" evidence="2">
    <location>
        <begin position="66"/>
        <end position="280"/>
    </location>
</feature>
<feature type="binding site" evidence="1">
    <location>
        <position position="54"/>
    </location>
    <ligand>
        <name>[4Fe-4S] cluster</name>
        <dbReference type="ChEBI" id="CHEBI:49883"/>
        <label>1</label>
    </ligand>
</feature>
<feature type="binding site" evidence="1">
    <location>
        <position position="59"/>
    </location>
    <ligand>
        <name>[4Fe-4S] cluster</name>
        <dbReference type="ChEBI" id="CHEBI:49883"/>
        <label>1</label>
    </ligand>
</feature>
<feature type="binding site" evidence="1">
    <location>
        <position position="65"/>
    </location>
    <ligand>
        <name>[4Fe-4S] cluster</name>
        <dbReference type="ChEBI" id="CHEBI:49883"/>
        <label>1</label>
    </ligand>
</feature>
<feature type="binding site" evidence="1">
    <location>
        <position position="80"/>
    </location>
    <ligand>
        <name>[4Fe-4S] cluster</name>
        <dbReference type="ChEBI" id="CHEBI:49883"/>
        <label>2</label>
        <note>4Fe-4S-S-AdoMet</note>
    </ligand>
</feature>
<feature type="binding site" evidence="1">
    <location>
        <position position="84"/>
    </location>
    <ligand>
        <name>[4Fe-4S] cluster</name>
        <dbReference type="ChEBI" id="CHEBI:49883"/>
        <label>2</label>
        <note>4Fe-4S-S-AdoMet</note>
    </ligand>
</feature>
<feature type="binding site" evidence="1">
    <location>
        <position position="87"/>
    </location>
    <ligand>
        <name>[4Fe-4S] cluster</name>
        <dbReference type="ChEBI" id="CHEBI:49883"/>
        <label>2</label>
        <note>4Fe-4S-S-AdoMet</note>
    </ligand>
</feature>
<feature type="binding site" evidence="1">
    <location>
        <position position="291"/>
    </location>
    <ligand>
        <name>[4Fe-4S] cluster</name>
        <dbReference type="ChEBI" id="CHEBI:49883"/>
        <label>1</label>
    </ligand>
</feature>
<proteinExistence type="inferred from homology"/>
<reference key="1">
    <citation type="journal article" date="2006" name="Proc. Natl. Acad. Sci. U.S.A.">
        <title>Genome reduction in Leptospira borgpetersenii reflects limited transmission potential.</title>
        <authorList>
            <person name="Bulach D.M."/>
            <person name="Zuerner R.L."/>
            <person name="Wilson P."/>
            <person name="Seemann T."/>
            <person name="McGrath A."/>
            <person name="Cullen P.A."/>
            <person name="Davis J."/>
            <person name="Johnson M."/>
            <person name="Kuczek E."/>
            <person name="Alt D.P."/>
            <person name="Peterson-Burch B."/>
            <person name="Coppel R.L."/>
            <person name="Rood J.I."/>
            <person name="Davies J.K."/>
            <person name="Adler B."/>
        </authorList>
    </citation>
    <scope>NUCLEOTIDE SEQUENCE [LARGE SCALE GENOMIC DNA]</scope>
    <source>
        <strain>L550</strain>
    </source>
</reference>
<name>LIPA_LEPBL</name>
<sequence>MINPLKKKPRTHFLQKAPEKPDWLKVKLTFPDPKNNPVAIVRNSLEKKKLNTVCESASCPNLNHCWSRKTATYMLGGDICTRRCSYCDVASGKPSALDRDEPKRVAESAIALGLKHVVITAVNRDDLEDGGAAHFAETVEVVREGLPDCKIELLVPDFKVRPESLEIIFQCKPDIFNHNVETIKRLFPEVAPQKKYERSLDVLKIASEKGFLTKSGLILGMGETVEEVKECMRDLIGVGVSLLTLGQYLQPTPTHLPVKSYVLPEVFQELRIYGKSIGFKGVFSGPLVRSSYHADEQVSWNP</sequence>
<protein>
    <recommendedName>
        <fullName evidence="1">Lipoyl synthase</fullName>
        <ecNumber evidence="1">2.8.1.8</ecNumber>
    </recommendedName>
    <alternativeName>
        <fullName evidence="1">Lip-syn</fullName>
        <shortName evidence="1">LS</shortName>
    </alternativeName>
    <alternativeName>
        <fullName evidence="1">Lipoate synthase</fullName>
    </alternativeName>
    <alternativeName>
        <fullName evidence="1">Lipoic acid synthase</fullName>
    </alternativeName>
    <alternativeName>
        <fullName evidence="1">Sulfur insertion protein LipA</fullName>
    </alternativeName>
</protein>